<reference key="1">
    <citation type="journal article" date="1986" name="Gene">
        <title>Nucleotide sequence of the woodchuck hepatitis virus surface antigen mRNAs and the variability of three overlapping viral genes.</title>
        <authorList>
            <person name="Etiemble J."/>
            <person name="Moeroey T."/>
            <person name="Trepo C."/>
            <person name="Tiollais P."/>
            <person name="Buendia M.-A."/>
        </authorList>
    </citation>
    <scope>NUCLEOTIDE SEQUENCE [MRNA]</scope>
</reference>
<reference key="2">
    <citation type="journal article" date="2007" name="World J. Gastroenterol.">
        <title>Hepatitis B virus replication.</title>
        <authorList>
            <person name="Beck J."/>
            <person name="Nassal M."/>
        </authorList>
    </citation>
    <scope>REVIEW</scope>
</reference>
<protein>
    <recommendedName>
        <fullName>Protein P</fullName>
    </recommendedName>
    <domain>
        <recommendedName>
            <fullName>DNA-directed DNA polymerase</fullName>
            <ecNumber>2.7.7.7</ecNumber>
        </recommendedName>
    </domain>
    <domain>
        <recommendedName>
            <fullName>RNA-directed DNA polymerase</fullName>
            <ecNumber>2.7.7.49</ecNumber>
        </recommendedName>
    </domain>
    <domain>
        <recommendedName>
            <fullName>Ribonuclease H</fullName>
            <ecNumber>3.1.26.4</ecNumber>
        </recommendedName>
    </domain>
</protein>
<feature type="chain" id="PRO_0000222353" description="Protein P">
    <location>
        <begin position="1"/>
        <end position="556"/>
    </location>
</feature>
<feature type="domain" description="Reverse transcriptase" evidence="2">
    <location>
        <begin position="70"/>
        <end position="311"/>
    </location>
</feature>
<feature type="region of interest" description="Spacer" evidence="1">
    <location>
        <begin position="1"/>
        <end position="59"/>
    </location>
</feature>
<feature type="region of interest" description="Polymerase/reverse transcriptase domain (RT)" evidence="1">
    <location>
        <begin position="60"/>
        <end position="401"/>
    </location>
</feature>
<feature type="region of interest" description="RnaseH domain (RH)" evidence="1">
    <location>
        <begin position="402"/>
        <end position="556"/>
    </location>
</feature>
<feature type="binding site" evidence="2">
    <location>
        <position position="142"/>
    </location>
    <ligand>
        <name>Mg(2+)</name>
        <dbReference type="ChEBI" id="CHEBI:18420"/>
        <note>catalytic</note>
    </ligand>
</feature>
<feature type="binding site" evidence="2">
    <location>
        <position position="262"/>
    </location>
    <ligand>
        <name>Mg(2+)</name>
        <dbReference type="ChEBI" id="CHEBI:18420"/>
        <note>catalytic</note>
    </ligand>
</feature>
<feature type="binding site" evidence="2">
    <location>
        <position position="263"/>
    </location>
    <ligand>
        <name>Mg(2+)</name>
        <dbReference type="ChEBI" id="CHEBI:18420"/>
        <note>catalytic</note>
    </ligand>
</feature>
<feature type="non-terminal residue">
    <location>
        <position position="1"/>
    </location>
</feature>
<organism>
    <name type="scientific">Woodchuck hepatitis B virus (isolate w64/pWS23)</name>
    <name type="common">WHV</name>
    <dbReference type="NCBI Taxonomy" id="10436"/>
    <lineage>
        <taxon>Viruses</taxon>
        <taxon>Riboviria</taxon>
        <taxon>Pararnavirae</taxon>
        <taxon>Artverviricota</taxon>
        <taxon>Revtraviricetes</taxon>
        <taxon>Blubervirales</taxon>
        <taxon>Hepadnaviridae</taxon>
        <taxon>Orthohepadnavirus</taxon>
        <taxon>Woodchuck hepatitis virus</taxon>
    </lineage>
</organism>
<proteinExistence type="evidence at transcript level"/>
<keyword id="KW-0235">DNA replication</keyword>
<keyword id="KW-0238">DNA-binding</keyword>
<keyword id="KW-0239">DNA-directed DNA polymerase</keyword>
<keyword id="KW-0255">Endonuclease</keyword>
<keyword id="KW-0378">Hydrolase</keyword>
<keyword id="KW-0460">Magnesium</keyword>
<keyword id="KW-0479">Metal-binding</keyword>
<keyword id="KW-0511">Multifunctional enzyme</keyword>
<keyword id="KW-0540">Nuclease</keyword>
<keyword id="KW-0548">Nucleotidyltransferase</keyword>
<keyword id="KW-0695">RNA-directed DNA polymerase</keyword>
<keyword id="KW-0808">Transferase</keyword>
<gene>
    <name type="primary">P</name>
</gene>
<organismHost>
    <name type="scientific">Marmota monax</name>
    <name type="common">Woodchuck</name>
    <dbReference type="NCBI Taxonomy" id="9995"/>
</organismHost>
<sequence>SKRYSPPLNYEKSDFSSPGVRGRITRLDNNGTPPQCLWRSFYNTKPCGSYCIHHIVSSLDDWGPCTVTGDVTIKSPRTPRRITGGVFLVDKNPNNSSESRLVVDFSQFSRGHTRVHWPKFAVPNLQTLANLLSTNLQWLSLDVSAAFYHIPISPAAVPHLLVGSPGLERFTTCLSSSTHNGNDSQLQTMHALCTRHVYSSLLLLFKTYGRKLHLLAHPFIMGFRKLPMGVGLSPFLLAQFTSALASMVRRNFPHCVVFAYMDDLVLGARTSEHLTAIYSHICSVFLDLGIHLNVNKTKWWGNHLHFMGYVITSSGVLPQDKHVKKLSRYLRSVPVNQPLDYKICERLTGILNYVAPFTLCGYAALMPLYHAIASRTAFIFSSLYKSWLLSLYEELWPVVRQRGVVCTVFADATPTGWGIATTCQLLSGTFAFPLPIATAELIAACLARCWTGARLLGTDNSVVLSGKLTSFPWLLACVANWILRGTSFCYVPSALNPADLPSRGLLPVLRPLPRLRLRPQTSRISLWAASPPVSPRRPVRVAWSSPVQTCEPWIPP</sequence>
<name>DPOL_WHV6</name>
<evidence type="ECO:0000250" key="1"/>
<evidence type="ECO:0000255" key="2">
    <source>
        <dbReference type="PROSITE-ProRule" id="PRU00405"/>
    </source>
</evidence>
<evidence type="ECO:0000305" key="3"/>
<accession>P11292</accession>
<comment type="function">
    <text evidence="1">Multifunctional enzyme that converts the viral RNA genome into dsDNA in viral cytoplasmic capsids. This enzyme displays a DNA polymerase activity that can copy either DNA or RNA templates, and a ribonuclease H (RNase H) activity that cleaves the RNA strand of RNA-DNA heteroduplexes in a partially processive 3'- to 5'-endonucleasic mode. Neo-synthesized pregenomic RNA (pgRNA) are encapsidated together with the P protein, and reverse-transcribed inside the nucleocapsid. Initiation of reverse-transcription occurs first by binding the epsilon loop on the pgRNA genome, and is initiated by protein priming, thereby the 5'-end of (-)DNA is covalently linked to P protein. Partial (+)DNA is synthesized from the (-)DNA template and generates the relaxed circular DNA (RC-DNA) genome. After budding and infection, the RC-DNA migrates in the nucleus, and is converted into a plasmid-like covalently closed circular DNA (cccDNA). The activity of P protein does not seem to be necessary for cccDNA generation, and is presumably released from (+)DNA by host nuclear DNA repair machinery (By similarity).</text>
</comment>
<comment type="catalytic activity">
    <reaction evidence="2">
        <text>DNA(n) + a 2'-deoxyribonucleoside 5'-triphosphate = DNA(n+1) + diphosphate</text>
        <dbReference type="Rhea" id="RHEA:22508"/>
        <dbReference type="Rhea" id="RHEA-COMP:17339"/>
        <dbReference type="Rhea" id="RHEA-COMP:17340"/>
        <dbReference type="ChEBI" id="CHEBI:33019"/>
        <dbReference type="ChEBI" id="CHEBI:61560"/>
        <dbReference type="ChEBI" id="CHEBI:173112"/>
        <dbReference type="EC" id="2.7.7.7"/>
    </reaction>
</comment>
<comment type="catalytic activity">
    <reaction evidence="2">
        <text>DNA(n) + a 2'-deoxyribonucleoside 5'-triphosphate = DNA(n+1) + diphosphate</text>
        <dbReference type="Rhea" id="RHEA:22508"/>
        <dbReference type="Rhea" id="RHEA-COMP:17339"/>
        <dbReference type="Rhea" id="RHEA-COMP:17340"/>
        <dbReference type="ChEBI" id="CHEBI:33019"/>
        <dbReference type="ChEBI" id="CHEBI:61560"/>
        <dbReference type="ChEBI" id="CHEBI:173112"/>
        <dbReference type="EC" id="2.7.7.49"/>
    </reaction>
</comment>
<comment type="catalytic activity">
    <reaction>
        <text>Endonucleolytic cleavage to 5'-phosphomonoester.</text>
        <dbReference type="EC" id="3.1.26.4"/>
    </reaction>
</comment>
<comment type="activity regulation">
    <text evidence="1">Activated by host HSP70 and HSP40 in vitro to be able to bind the epsilon loop of the pgRNA. Because deletion of the RNase H region renders the protein partly chaperone-independent, the chaperones may be needed indirectly to relieve occlusion of the RNA-binding site by this domain. Inhibited by several reverse-transcriptase inhibitors: Lamivudine, Adefovir and Entecavir (By similarity).</text>
</comment>
<comment type="domain">
    <text evidence="1">Terminal protein domain (TP) is hepadnavirus-specific. Spacer domain is highly variable and separates the TP and RT domains. Polymerase/reverse-transcriptase domain (RT) and ribonuclease H domain (RH) are similar to retrovirus reverse transcriptase/RNase H (By similarity).</text>
</comment>
<comment type="domain">
    <text evidence="1">The polymerase/reverse transcriptase (RT) and ribonuclease H (RH) domains are structured in five subdomains: finger, palm, thumb, connection and RNase H. Within the palm subdomain, the 'primer grip' region is thought to be involved in the positioning of the primer terminus for accommodating the incoming nucleotide. The RH domain stabilizes the association of RT with primer-template (By similarity).</text>
</comment>
<comment type="similarity">
    <text evidence="3">Belongs to the hepadnaviridae P protein family.</text>
</comment>
<dbReference type="EC" id="2.7.7.7"/>
<dbReference type="EC" id="2.7.7.49"/>
<dbReference type="EC" id="3.1.26.4"/>
<dbReference type="EMBL" id="M15954">
    <property type="protein sequence ID" value="AAA69573.1"/>
    <property type="molecule type" value="mRNA"/>
</dbReference>
<dbReference type="PIR" id="A29498">
    <property type="entry name" value="JDVL64"/>
</dbReference>
<dbReference type="GO" id="GO:0003677">
    <property type="term" value="F:DNA binding"/>
    <property type="evidence" value="ECO:0007669"/>
    <property type="project" value="UniProtKB-KW"/>
</dbReference>
<dbReference type="GO" id="GO:0003887">
    <property type="term" value="F:DNA-directed DNA polymerase activity"/>
    <property type="evidence" value="ECO:0007669"/>
    <property type="project" value="UniProtKB-KW"/>
</dbReference>
<dbReference type="GO" id="GO:0046872">
    <property type="term" value="F:metal ion binding"/>
    <property type="evidence" value="ECO:0007669"/>
    <property type="project" value="UniProtKB-KW"/>
</dbReference>
<dbReference type="GO" id="GO:0003964">
    <property type="term" value="F:RNA-directed DNA polymerase activity"/>
    <property type="evidence" value="ECO:0007669"/>
    <property type="project" value="UniProtKB-KW"/>
</dbReference>
<dbReference type="GO" id="GO:0004523">
    <property type="term" value="F:RNA-DNA hybrid ribonuclease activity"/>
    <property type="evidence" value="ECO:0007669"/>
    <property type="project" value="UniProtKB-EC"/>
</dbReference>
<dbReference type="GO" id="GO:0006260">
    <property type="term" value="P:DNA replication"/>
    <property type="evidence" value="ECO:0007669"/>
    <property type="project" value="UniProtKB-KW"/>
</dbReference>
<dbReference type="Gene3D" id="3.30.70.270">
    <property type="match status" value="1"/>
</dbReference>
<dbReference type="InterPro" id="IPR043502">
    <property type="entry name" value="DNA/RNA_pol_sf"/>
</dbReference>
<dbReference type="InterPro" id="IPR001462">
    <property type="entry name" value="DNApol_viral_C"/>
</dbReference>
<dbReference type="InterPro" id="IPR052055">
    <property type="entry name" value="Hepadnavirus_pol/RT"/>
</dbReference>
<dbReference type="InterPro" id="IPR043128">
    <property type="entry name" value="Rev_trsase/Diguanyl_cyclase"/>
</dbReference>
<dbReference type="InterPro" id="IPR000477">
    <property type="entry name" value="RT_dom"/>
</dbReference>
<dbReference type="PANTHER" id="PTHR33050">
    <property type="entry name" value="REVERSE TRANSCRIPTASE DOMAIN-CONTAINING PROTEIN"/>
    <property type="match status" value="1"/>
</dbReference>
<dbReference type="PANTHER" id="PTHR33050:SF7">
    <property type="entry name" value="RIBONUCLEASE H"/>
    <property type="match status" value="1"/>
</dbReference>
<dbReference type="Pfam" id="PF00336">
    <property type="entry name" value="DNA_pol_viral_C"/>
    <property type="match status" value="1"/>
</dbReference>
<dbReference type="Pfam" id="PF00078">
    <property type="entry name" value="RVT_1"/>
    <property type="match status" value="1"/>
</dbReference>
<dbReference type="SUPFAM" id="SSF56672">
    <property type="entry name" value="DNA/RNA polymerases"/>
    <property type="match status" value="1"/>
</dbReference>
<dbReference type="PROSITE" id="PS50878">
    <property type="entry name" value="RT_POL"/>
    <property type="match status" value="1"/>
</dbReference>